<name>BIG1E_ARATH</name>
<gene>
    <name evidence="6" type="ordered locus">At1g69160</name>
    <name evidence="4" type="ORF">F4N2.12</name>
</gene>
<reference key="1">
    <citation type="journal article" date="2000" name="Nature">
        <title>Sequence and analysis of chromosome 1 of the plant Arabidopsis thaliana.</title>
        <authorList>
            <person name="Theologis A."/>
            <person name="Ecker J.R."/>
            <person name="Palm C.J."/>
            <person name="Federspiel N.A."/>
            <person name="Kaul S."/>
            <person name="White O."/>
            <person name="Alonso J."/>
            <person name="Altafi H."/>
            <person name="Araujo R."/>
            <person name="Bowman C.L."/>
            <person name="Brooks S.Y."/>
            <person name="Buehler E."/>
            <person name="Chan A."/>
            <person name="Chao Q."/>
            <person name="Chen H."/>
            <person name="Cheuk R.F."/>
            <person name="Chin C.W."/>
            <person name="Chung M.K."/>
            <person name="Conn L."/>
            <person name="Conway A.B."/>
            <person name="Conway A.R."/>
            <person name="Creasy T.H."/>
            <person name="Dewar K."/>
            <person name="Dunn P."/>
            <person name="Etgu P."/>
            <person name="Feldblyum T.V."/>
            <person name="Feng J.-D."/>
            <person name="Fong B."/>
            <person name="Fujii C.Y."/>
            <person name="Gill J.E."/>
            <person name="Goldsmith A.D."/>
            <person name="Haas B."/>
            <person name="Hansen N.F."/>
            <person name="Hughes B."/>
            <person name="Huizar L."/>
            <person name="Hunter J.L."/>
            <person name="Jenkins J."/>
            <person name="Johnson-Hopson C."/>
            <person name="Khan S."/>
            <person name="Khaykin E."/>
            <person name="Kim C.J."/>
            <person name="Koo H.L."/>
            <person name="Kremenetskaia I."/>
            <person name="Kurtz D.B."/>
            <person name="Kwan A."/>
            <person name="Lam B."/>
            <person name="Langin-Hooper S."/>
            <person name="Lee A."/>
            <person name="Lee J.M."/>
            <person name="Lenz C.A."/>
            <person name="Li J.H."/>
            <person name="Li Y.-P."/>
            <person name="Lin X."/>
            <person name="Liu S.X."/>
            <person name="Liu Z.A."/>
            <person name="Luros J.S."/>
            <person name="Maiti R."/>
            <person name="Marziali A."/>
            <person name="Militscher J."/>
            <person name="Miranda M."/>
            <person name="Nguyen M."/>
            <person name="Nierman W.C."/>
            <person name="Osborne B.I."/>
            <person name="Pai G."/>
            <person name="Peterson J."/>
            <person name="Pham P.K."/>
            <person name="Rizzo M."/>
            <person name="Rooney T."/>
            <person name="Rowley D."/>
            <person name="Sakano H."/>
            <person name="Salzberg S.L."/>
            <person name="Schwartz J.R."/>
            <person name="Shinn P."/>
            <person name="Southwick A.M."/>
            <person name="Sun H."/>
            <person name="Tallon L.J."/>
            <person name="Tambunga G."/>
            <person name="Toriumi M.J."/>
            <person name="Town C.D."/>
            <person name="Utterback T."/>
            <person name="Van Aken S."/>
            <person name="Vaysberg M."/>
            <person name="Vysotskaia V.S."/>
            <person name="Walker M."/>
            <person name="Wu D."/>
            <person name="Yu G."/>
            <person name="Fraser C.M."/>
            <person name="Venter J.C."/>
            <person name="Davis R.W."/>
        </authorList>
    </citation>
    <scope>NUCLEOTIDE SEQUENCE [LARGE SCALE GENOMIC DNA]</scope>
    <source>
        <strain>cv. Columbia</strain>
    </source>
</reference>
<reference key="2">
    <citation type="journal article" date="2017" name="Plant J.">
        <title>Araport11: a complete reannotation of the Arabidopsis thaliana reference genome.</title>
        <authorList>
            <person name="Cheng C.Y."/>
            <person name="Krishnakumar V."/>
            <person name="Chan A.P."/>
            <person name="Thibaud-Nissen F."/>
            <person name="Schobel S."/>
            <person name="Town C.D."/>
        </authorList>
    </citation>
    <scope>GENOME REANNOTATION</scope>
    <source>
        <strain>cv. Columbia</strain>
    </source>
</reference>
<reference key="3">
    <citation type="journal article" date="2003" name="Science">
        <title>Empirical analysis of transcriptional activity in the Arabidopsis genome.</title>
        <authorList>
            <person name="Yamada K."/>
            <person name="Lim J."/>
            <person name="Dale J.M."/>
            <person name="Chen H."/>
            <person name="Shinn P."/>
            <person name="Palm C.J."/>
            <person name="Southwick A.M."/>
            <person name="Wu H.C."/>
            <person name="Kim C.J."/>
            <person name="Nguyen M."/>
            <person name="Pham P.K."/>
            <person name="Cheuk R.F."/>
            <person name="Karlin-Newmann G."/>
            <person name="Liu S.X."/>
            <person name="Lam B."/>
            <person name="Sakano H."/>
            <person name="Wu T."/>
            <person name="Yu G."/>
            <person name="Miranda M."/>
            <person name="Quach H.L."/>
            <person name="Tripp M."/>
            <person name="Chang C.H."/>
            <person name="Lee J.M."/>
            <person name="Toriumi M.J."/>
            <person name="Chan M.M."/>
            <person name="Tang C.C."/>
            <person name="Onodera C.S."/>
            <person name="Deng J.M."/>
            <person name="Akiyama K."/>
            <person name="Ansari Y."/>
            <person name="Arakawa T."/>
            <person name="Banh J."/>
            <person name="Banno F."/>
            <person name="Bowser L."/>
            <person name="Brooks S.Y."/>
            <person name="Carninci P."/>
            <person name="Chao Q."/>
            <person name="Choy N."/>
            <person name="Enju A."/>
            <person name="Goldsmith A.D."/>
            <person name="Gurjal M."/>
            <person name="Hansen N.F."/>
            <person name="Hayashizaki Y."/>
            <person name="Johnson-Hopson C."/>
            <person name="Hsuan V.W."/>
            <person name="Iida K."/>
            <person name="Karnes M."/>
            <person name="Khan S."/>
            <person name="Koesema E."/>
            <person name="Ishida J."/>
            <person name="Jiang P.X."/>
            <person name="Jones T."/>
            <person name="Kawai J."/>
            <person name="Kamiya A."/>
            <person name="Meyers C."/>
            <person name="Nakajima M."/>
            <person name="Narusaka M."/>
            <person name="Seki M."/>
            <person name="Sakurai T."/>
            <person name="Satou M."/>
            <person name="Tamse R."/>
            <person name="Vaysberg M."/>
            <person name="Wallender E.K."/>
            <person name="Wong C."/>
            <person name="Yamamura Y."/>
            <person name="Yuan S."/>
            <person name="Shinozaki K."/>
            <person name="Davis R.W."/>
            <person name="Theologis A."/>
            <person name="Ecker J.R."/>
        </authorList>
    </citation>
    <scope>NUCLEOTIDE SEQUENCE [LARGE SCALE MRNA]</scope>
    <source>
        <strain>cv. Columbia</strain>
    </source>
</reference>
<accession>Q93Z37</accession>
<accession>Q9LQA5</accession>
<evidence type="ECO:0000250" key="1">
    <source>
        <dbReference type="UniProtKB" id="Q10R09"/>
    </source>
</evidence>
<evidence type="ECO:0000256" key="2">
    <source>
        <dbReference type="SAM" id="MobiDB-lite"/>
    </source>
</evidence>
<evidence type="ECO:0000305" key="3"/>
<evidence type="ECO:0000312" key="4">
    <source>
        <dbReference type="EMBL" id="AAF27057.1"/>
    </source>
</evidence>
<evidence type="ECO:0000312" key="5">
    <source>
        <dbReference type="EMBL" id="AAL25580.1"/>
    </source>
</evidence>
<evidence type="ECO:0000312" key="6">
    <source>
        <dbReference type="EMBL" id="AEE34889.1"/>
    </source>
</evidence>
<organism evidence="5">
    <name type="scientific">Arabidopsis thaliana</name>
    <name type="common">Mouse-ear cress</name>
    <dbReference type="NCBI Taxonomy" id="3702"/>
    <lineage>
        <taxon>Eukaryota</taxon>
        <taxon>Viridiplantae</taxon>
        <taxon>Streptophyta</taxon>
        <taxon>Embryophyta</taxon>
        <taxon>Tracheophyta</taxon>
        <taxon>Spermatophyta</taxon>
        <taxon>Magnoliopsida</taxon>
        <taxon>eudicotyledons</taxon>
        <taxon>Gunneridae</taxon>
        <taxon>Pentapetalae</taxon>
        <taxon>rosids</taxon>
        <taxon>malvids</taxon>
        <taxon>Brassicales</taxon>
        <taxon>Brassicaceae</taxon>
        <taxon>Camelineae</taxon>
        <taxon>Arabidopsis</taxon>
    </lineage>
</organism>
<sequence>MSMKGISSAESDKLSRRISLTHKRNSEELDVFEAAVYFGYNEASSGDHGHTQKYGYNAAREENPRRWGILGGGRRISLDLPIRCSEQVYHLQQDHHEKHEVTTIKERLGNVRHKQPSSPGGKIASFLNSLFHQAGSKKNKSKSKSKTKPTDPEVEEEIPGGGWMRRRRRSSISHFFSSSRSTSTTTTTTASSSSKSLISSSSSGFRTPPPYLNTPTKNYKQFLNYTSATKQVGEEETKTNKEYSWLDEKLKVMESLSENQRIWSDDEDIDDDRRIKREGEDDGMESDSSSDLFELQNYELSRGGLPVYETTNVANINKTHI</sequence>
<keyword id="KW-0927">Auxin signaling pathway</keyword>
<keyword id="KW-1003">Cell membrane</keyword>
<keyword id="KW-0472">Membrane</keyword>
<keyword id="KW-1185">Reference proteome</keyword>
<keyword id="KW-0813">Transport</keyword>
<dbReference type="EMBL" id="AC008262">
    <property type="protein sequence ID" value="AAF27057.1"/>
    <property type="status" value="ALT_INIT"/>
    <property type="molecule type" value="Genomic_DNA"/>
</dbReference>
<dbReference type="EMBL" id="CP002684">
    <property type="protein sequence ID" value="AEE34889.1"/>
    <property type="molecule type" value="Genomic_DNA"/>
</dbReference>
<dbReference type="EMBL" id="AY058166">
    <property type="protein sequence ID" value="AAL25580.1"/>
    <property type="molecule type" value="mRNA"/>
</dbReference>
<dbReference type="EMBL" id="AY093178">
    <property type="protein sequence ID" value="AAM13177.1"/>
    <property type="molecule type" value="mRNA"/>
</dbReference>
<dbReference type="EMBL" id="BT003390">
    <property type="protein sequence ID" value="AAO30053.1"/>
    <property type="molecule type" value="mRNA"/>
</dbReference>
<dbReference type="PIR" id="E96715">
    <property type="entry name" value="E96715"/>
</dbReference>
<dbReference type="RefSeq" id="NP_564952.1">
    <property type="nucleotide sequence ID" value="NM_105583.3"/>
</dbReference>
<dbReference type="FunCoup" id="Q93Z37">
    <property type="interactions" value="142"/>
</dbReference>
<dbReference type="STRING" id="3702.Q93Z37"/>
<dbReference type="iPTMnet" id="Q93Z37"/>
<dbReference type="PaxDb" id="3702-AT1G69160.1"/>
<dbReference type="ProteomicsDB" id="240839"/>
<dbReference type="EnsemblPlants" id="AT1G69160.1">
    <property type="protein sequence ID" value="AT1G69160.1"/>
    <property type="gene ID" value="AT1G69160"/>
</dbReference>
<dbReference type="GeneID" id="843247"/>
<dbReference type="Gramene" id="AT1G69160.1">
    <property type="protein sequence ID" value="AT1G69160.1"/>
    <property type="gene ID" value="AT1G69160"/>
</dbReference>
<dbReference type="KEGG" id="ath:AT1G69160"/>
<dbReference type="Araport" id="AT1G69160"/>
<dbReference type="TAIR" id="AT1G69160">
    <property type="gene designation" value="BGL1"/>
</dbReference>
<dbReference type="eggNOG" id="ENOG502RH6J">
    <property type="taxonomic scope" value="Eukaryota"/>
</dbReference>
<dbReference type="HOGENOM" id="CLU_083143_0_0_1"/>
<dbReference type="InParanoid" id="Q93Z37"/>
<dbReference type="OMA" id="NIRVDRY"/>
<dbReference type="OrthoDB" id="1871242at2759"/>
<dbReference type="PhylomeDB" id="Q93Z37"/>
<dbReference type="PRO" id="PR:Q93Z37"/>
<dbReference type="Proteomes" id="UP000006548">
    <property type="component" value="Chromosome 1"/>
</dbReference>
<dbReference type="ExpressionAtlas" id="Q93Z37">
    <property type="expression patterns" value="baseline and differential"/>
</dbReference>
<dbReference type="GO" id="GO:0005886">
    <property type="term" value="C:plasma membrane"/>
    <property type="evidence" value="ECO:0000250"/>
    <property type="project" value="UniProtKB"/>
</dbReference>
<dbReference type="GO" id="GO:0060918">
    <property type="term" value="P:auxin transport"/>
    <property type="evidence" value="ECO:0000250"/>
    <property type="project" value="UniProtKB"/>
</dbReference>
<dbReference type="GO" id="GO:0009734">
    <property type="term" value="P:auxin-activated signaling pathway"/>
    <property type="evidence" value="ECO:0007669"/>
    <property type="project" value="UniProtKB-KW"/>
</dbReference>
<dbReference type="GO" id="GO:0010929">
    <property type="term" value="P:positive regulation of auxin mediated signaling pathway"/>
    <property type="evidence" value="ECO:0000250"/>
    <property type="project" value="UniProtKB"/>
</dbReference>
<dbReference type="InterPro" id="IPR039621">
    <property type="entry name" value="BG1-like"/>
</dbReference>
<dbReference type="PANTHER" id="PTHR33541">
    <property type="entry name" value="PROTEIN BIG GRAIN 1-LIKE A-RELATED"/>
    <property type="match status" value="1"/>
</dbReference>
<dbReference type="PANTHER" id="PTHR33541:SF11">
    <property type="entry name" value="PROTEIN BIG GRAIN 1-LIKE E"/>
    <property type="match status" value="1"/>
</dbReference>
<proteinExistence type="evidence at transcript level"/>
<protein>
    <recommendedName>
        <fullName evidence="3">Protein BIG GRAIN 1-like E</fullName>
    </recommendedName>
</protein>
<comment type="function">
    <text evidence="1">Involved in auxin transport. Regulator of the auxin signaling pathway.</text>
</comment>
<comment type="subcellular location">
    <subcellularLocation>
        <location evidence="1">Cell membrane</location>
    </subcellularLocation>
</comment>
<comment type="similarity">
    <text evidence="3">Belongs to the BIG GRAIN 1 (BG1) plant protein family.</text>
</comment>
<comment type="sequence caution" evidence="3">
    <conflict type="erroneous initiation">
        <sequence resource="EMBL-CDS" id="AAF27057"/>
    </conflict>
    <text>Truncated N-terminus.</text>
</comment>
<feature type="chain" id="PRO_0000434448" description="Protein BIG GRAIN 1-like E">
    <location>
        <begin position="1"/>
        <end position="321"/>
    </location>
</feature>
<feature type="region of interest" description="Disordered" evidence="2">
    <location>
        <begin position="134"/>
        <end position="217"/>
    </location>
</feature>
<feature type="compositionally biased region" description="Basic residues" evidence="2">
    <location>
        <begin position="135"/>
        <end position="147"/>
    </location>
</feature>
<feature type="compositionally biased region" description="Low complexity" evidence="2">
    <location>
        <begin position="172"/>
        <end position="206"/>
    </location>
</feature>